<reference key="1">
    <citation type="journal article" date="2003" name="Science">
        <title>Characterization of a novel coronavirus associated with severe acute respiratory syndrome.</title>
        <authorList>
            <person name="Rota P.A."/>
            <person name="Oberste M.S."/>
            <person name="Monroe S.S."/>
            <person name="Nix W.A."/>
            <person name="Campagnoli R."/>
            <person name="Icenogle J.P."/>
            <person name="Penaranda S."/>
            <person name="Bankamp B."/>
            <person name="Maher K."/>
            <person name="Chen M.-H."/>
            <person name="Tong S."/>
            <person name="Tamin A."/>
            <person name="Lowe L."/>
            <person name="Frace M."/>
            <person name="DeRisi J.L."/>
            <person name="Chen Q."/>
            <person name="Wang D."/>
            <person name="Erdman D.D."/>
            <person name="Peret T.C.T."/>
            <person name="Burns C."/>
            <person name="Ksiazek T.G."/>
            <person name="Rollin P.E."/>
            <person name="Sanchez A."/>
            <person name="Liffick S."/>
            <person name="Holloway B."/>
            <person name="Limor J."/>
            <person name="McCaustland K."/>
            <person name="Olsen-Rasmussen M."/>
            <person name="Fouchier R."/>
            <person name="Guenther S."/>
            <person name="Osterhaus A.D.M.E."/>
            <person name="Drosten C."/>
            <person name="Pallansch M.A."/>
            <person name="Anderson L.J."/>
            <person name="Bellini W.J."/>
        </authorList>
    </citation>
    <scope>NUCLEOTIDE SEQUENCE [GENOMIC RNA]</scope>
    <source>
        <strain>Isolate Urbani</strain>
    </source>
</reference>
<reference key="2">
    <citation type="journal article" date="2003" name="Science">
        <title>The genome sequence of the SARS-associated coronavirus.</title>
        <authorList>
            <person name="Marra M.A."/>
            <person name="Jones S.J.M."/>
            <person name="Astell C.R."/>
            <person name="Holt R.A."/>
            <person name="Brooks-Wilson A."/>
            <person name="Butterfield Y.S.N."/>
            <person name="Khattra J."/>
            <person name="Asano J.K."/>
            <person name="Barber S.A."/>
            <person name="Chan S.Y."/>
            <person name="Cloutier A."/>
            <person name="Coughlin S.M."/>
            <person name="Freeman D."/>
            <person name="Girn N."/>
            <person name="Griffith O.L."/>
            <person name="Leach S.R."/>
            <person name="Mayo M."/>
            <person name="McDonald H."/>
            <person name="Montgomery S.B."/>
            <person name="Pandoh P.K."/>
            <person name="Petrescu A.S."/>
            <person name="Robertson A.G."/>
            <person name="Schein J.E."/>
            <person name="Siddiqui A."/>
            <person name="Smailus D.E."/>
            <person name="Stott J.M."/>
            <person name="Yang G.S."/>
            <person name="Plummer F."/>
            <person name="Andonov A."/>
            <person name="Artsob H."/>
            <person name="Bastien N."/>
            <person name="Bernard K."/>
            <person name="Booth T.F."/>
            <person name="Bowness D."/>
            <person name="Czub M."/>
            <person name="Drebot M."/>
            <person name="Fernando L."/>
            <person name="Flick R."/>
            <person name="Garbutt M."/>
            <person name="Gray M."/>
            <person name="Grolla A."/>
            <person name="Jones S."/>
            <person name="Feldmann H."/>
            <person name="Meyers A."/>
            <person name="Kabani A."/>
            <person name="Li Y."/>
            <person name="Normand S."/>
            <person name="Stroher U."/>
            <person name="Tipples G.A."/>
            <person name="Tyler S."/>
            <person name="Vogrig R."/>
            <person name="Ward D."/>
            <person name="Watson B."/>
            <person name="Brunham R.C."/>
            <person name="Krajden M."/>
            <person name="Petric M."/>
            <person name="Skowronski D.M."/>
            <person name="Upton C."/>
            <person name="Roper R.L."/>
        </authorList>
    </citation>
    <scope>NUCLEOTIDE SEQUENCE [GENOMIC RNA]</scope>
    <source>
        <strain>Isolate Tor2</strain>
    </source>
</reference>
<reference key="3">
    <citation type="journal article" date="2003" name="N. Engl. J. Med.">
        <title>Coronavirus genomic-sequence variations and the epidemiology of the severe acute respiratory syndrome.</title>
        <authorList>
            <person name="Tsui S.K.W."/>
            <person name="Chim S.S.C."/>
            <person name="Lo Y.M.D."/>
        </authorList>
    </citation>
    <scope>NUCLEOTIDE SEQUENCE [GENOMIC RNA]</scope>
    <source>
        <strain>Isolate CUHK-Su10</strain>
        <strain>Isolate CUHK-W1</strain>
    </source>
</reference>
<reference key="4">
    <citation type="journal article" date="2003" name="Science">
        <title>Isolation and characterization of viruses related to the SARS coronavirus from animals in southern China.</title>
        <authorList>
            <person name="Guan Y."/>
            <person name="Zheng B.J."/>
            <person name="He Y.Q."/>
            <person name="Liu X.L."/>
            <person name="Zhuang Z.X."/>
            <person name="Cheung C.L."/>
            <person name="Luo S.W."/>
            <person name="Li P.H."/>
            <person name="Zhang L.J."/>
            <person name="Guan Y.J."/>
            <person name="Butt K.M."/>
            <person name="Wong K.L."/>
            <person name="Chan K.W."/>
            <person name="Lim W."/>
            <person name="Shortridge K.F."/>
            <person name="Yuen K.Y."/>
            <person name="Peiris J.S.M."/>
            <person name="Poon L.L.M."/>
        </authorList>
    </citation>
    <scope>NUCLEOTIDE SEQUENCE [GENOMIC RNA]</scope>
    <source>
        <strain>Isolate GZ50</strain>
        <strain>Isolate HKU-36871</strain>
    </source>
</reference>
<reference key="5">
    <citation type="journal article" date="2003" name="Exp. Biol. Med.">
        <title>The complete genome sequence of severe acute respiratory syndrome coronavirus strain HKU-39849 (HK-39).</title>
        <authorList>
            <person name="Zeng F.Y."/>
            <person name="Chan C.W."/>
            <person name="Chan M.N."/>
            <person name="Chen J.D."/>
            <person name="Chow K.Y.C."/>
            <person name="Hon C.C.C."/>
            <person name="Hui R.K.H."/>
            <person name="Li J."/>
            <person name="Li V.Y.Y."/>
            <person name="Wang C.Y."/>
            <person name="Wang P.Y."/>
            <person name="Guan Y."/>
            <person name="Zheng B."/>
            <person name="Poon L.L.M."/>
            <person name="Chan K.H."/>
            <person name="Yuen K.Y."/>
            <person name="Peiris J.S.M."/>
            <person name="Leung F.C."/>
        </authorList>
    </citation>
    <scope>NUCLEOTIDE SEQUENCE [GENOMIC RNA]</scope>
    <source>
        <strain>Isolate HKU-39849</strain>
    </source>
</reference>
<reference key="6">
    <citation type="journal article" date="2003" name="Lancet">
        <title>Comparative full-length genome sequence analysis of 14 SARS coronavirus isolates and common mutations associated with putative origins of infection.</title>
        <authorList>
            <person name="Ruan Y."/>
            <person name="Wei C.L."/>
            <person name="Ling A.E."/>
            <person name="Vega V.B."/>
            <person name="Thoreau H."/>
            <person name="Se Thoe S.Y."/>
            <person name="Chia J.-M."/>
            <person name="Ng P."/>
            <person name="Chiu K.P."/>
            <person name="Lim L."/>
            <person name="Zhang T."/>
            <person name="Chan K.P."/>
            <person name="Oon L.E.L."/>
            <person name="Ng M.L."/>
            <person name="Leo S.Y."/>
            <person name="Ng L.F.P."/>
            <person name="Ren E.C."/>
            <person name="Stanton L.W."/>
            <person name="Long P.M."/>
            <person name="Liu E.T."/>
        </authorList>
    </citation>
    <scope>NUCLEOTIDE SEQUENCE [GENOMIC RNA]</scope>
    <source>
        <strain>Isolate Sin2500</strain>
        <strain>Isolate Sin2677</strain>
        <strain>Isolate Sin2679</strain>
        <strain>Isolate Sin2748</strain>
        <strain>Isolate sin2774</strain>
    </source>
</reference>
<reference key="7">
    <citation type="journal article" date="2003" name="Lancet">
        <authorList>
            <person name="Ruan Y."/>
            <person name="Wei C.L."/>
            <person name="Ling A.E."/>
            <person name="Vega V.B."/>
            <person name="Thoreau H."/>
            <person name="Se Thoe S.Y."/>
            <person name="Chia J.-M."/>
            <person name="Ng P."/>
            <person name="Chiu K.P."/>
            <person name="Lim L."/>
            <person name="Zhang T."/>
            <person name="Chan K.P."/>
            <person name="Oon L.E.L."/>
            <person name="Ng M.L."/>
            <person name="Leo S.Y."/>
            <person name="Ng L.F.P."/>
            <person name="Ren E.C."/>
            <person name="Stanton L.W."/>
            <person name="Long P.M."/>
            <person name="Liu E.T."/>
        </authorList>
    </citation>
    <scope>ERRATUM OF PUBMED:12781537</scope>
</reference>
<reference key="8">
    <citation type="submission" date="2003-04" db="EMBL/GenBank/DDBJ databases">
        <authorList>
            <person name="Qin E."/>
            <person name="Zhu Q."/>
            <person name="Yu M."/>
            <person name="Fan B."/>
            <person name="Chang G."/>
            <person name="Si B."/>
            <person name="Yang B."/>
            <person name="Peng W."/>
            <person name="Jiang T."/>
            <person name="Liu B."/>
            <person name="Deng Y."/>
            <person name="Liu H."/>
            <person name="Zhang Y."/>
            <person name="Wang C."/>
            <person name="Li Y."/>
            <person name="Gan Y."/>
            <person name="Li X."/>
            <person name="Lu F."/>
            <person name="Tan G."/>
            <person name="Yang R."/>
            <person name="Cao W.S."/>
            <person name="Wang J."/>
            <person name="Chen W."/>
            <person name="Cong L."/>
            <person name="Deng Y."/>
            <person name="Dong W."/>
            <person name="Han Y."/>
            <person name="Hu W."/>
            <person name="Lei M."/>
            <person name="Li C."/>
            <person name="Li G."/>
            <person name="Li G."/>
            <person name="Li H."/>
            <person name="Li S."/>
            <person name="Li S."/>
            <person name="Li W."/>
            <person name="Li W."/>
            <person name="Lin W."/>
            <person name="Liu J."/>
            <person name="Liu Z."/>
            <person name="Lu H."/>
            <person name="Ni P."/>
            <person name="Qi Q."/>
            <person name="Sun Y."/>
            <person name="Tang L."/>
            <person name="Tong Z."/>
            <person name="Wang J."/>
            <person name="Wang X."/>
            <person name="Wu Q."/>
            <person name="Xi Y."/>
            <person name="Xu Z."/>
            <person name="Yang L."/>
            <person name="Ye C."/>
            <person name="Ye J."/>
            <person name="Zhang B."/>
            <person name="Zhang F."/>
            <person name="Zhang J."/>
            <person name="Zhang X."/>
            <person name="Zhou J."/>
            <person name="Yang H."/>
        </authorList>
    </citation>
    <scope>NUCLEOTIDE SEQUENCE [GENOMIC RNA]</scope>
    <source>
        <strain>Isolate BJ01</strain>
        <strain>Isolate BJ02</strain>
        <strain>Isolate BJ03</strain>
        <strain>Isolate BJ04</strain>
        <strain>Isolate GD01</strain>
    </source>
</reference>
<reference key="9">
    <citation type="submission" date="2003-05" db="EMBL/GenBank/DDBJ databases">
        <title>The complete genome of SARS coronavirus clone TW1.</title>
        <authorList>
            <person name="Yeh S.-H."/>
            <person name="Kao C.-L."/>
            <person name="Tsai C.-Y."/>
            <person name="Liu C.-J."/>
            <person name="Chen D.-S."/>
            <person name="Chen P.-J."/>
        </authorList>
    </citation>
    <scope>NUCLEOTIDE SEQUENCE [GENOMIC RNA]</scope>
    <source>
        <strain>Isolate TW1</strain>
    </source>
</reference>
<reference key="10">
    <citation type="submission" date="2003-05" db="EMBL/GenBank/DDBJ databases">
        <title>SARS virus is a close relative of type II coronaviruses.</title>
        <authorList>
            <person name="Eickmann M."/>
            <person name="Becker S."/>
            <person name="Klenk H.-D."/>
            <person name="Doerr H.W."/>
            <person name="Stadler K."/>
            <person name="Censini S."/>
            <person name="Guidotti S."/>
            <person name="Masignani V."/>
            <person name="Scarselli M."/>
            <person name="Mora M."/>
            <person name="Donati C."/>
            <person name="Han J."/>
            <person name="Song H.C."/>
            <person name="Abrignani S."/>
            <person name="Covacci A."/>
            <person name="Rappuoli R."/>
        </authorList>
    </citation>
    <scope>NUCLEOTIDE SEQUENCE [GENOMIC RNA]</scope>
    <source>
        <strain>Isolate FRA</strain>
    </source>
</reference>
<reference key="11">
    <citation type="journal article" date="2003" name="J. Gen. Virol.">
        <title>Mechanisms and enzymes involved in SARS coronavirus genome expression.</title>
        <authorList>
            <person name="Thiel V."/>
            <person name="Ivanov K.A."/>
            <person name="Putics A."/>
            <person name="Hertzig T."/>
            <person name="Schelle B."/>
            <person name="Bayer S."/>
            <person name="Weissbrich B."/>
            <person name="Snijder E.J."/>
            <person name="Rabenau H."/>
            <person name="Doerr H.W."/>
            <person name="Gorbalenya A.E."/>
            <person name="Ziebuhr J."/>
        </authorList>
    </citation>
    <scope>NUCLEOTIDE SEQUENCE [GENOMIC RNA]</scope>
    <source>
        <strain>Isolate Frankfurt 1</strain>
    </source>
</reference>
<reference key="12">
    <citation type="submission" date="2003-05" db="EMBL/GenBank/DDBJ databases">
        <authorList>
            <person name="Sun K."/>
            <person name="Anwar A."/>
            <person name="Gupta V."/>
            <person name="Tabiin M.T."/>
            <person name="Atkinson R."/>
            <person name="Chandrasekarn A."/>
            <person name="August T.J."/>
        </authorList>
    </citation>
    <scope>NUCLEOTIDE SEQUENCE [GENOMIC RNA]</scope>
</reference>
<reference key="13">
    <citation type="journal article" date="2003" name="Chin. Med. J.">
        <title>Severe acute respiratory syndrome-associated coronavirus genotype and its characterization.</title>
        <authorList>
            <person name="Li L."/>
            <person name="Wang Z."/>
            <person name="Lu Y."/>
            <person name="Bao Q."/>
            <person name="Chen S."/>
            <person name="Wu N."/>
            <person name="Cheng S."/>
            <person name="Weng J."/>
            <person name="Zhang Y."/>
            <person name="Yan J."/>
            <person name="Mei L."/>
            <person name="Wang X."/>
            <person name="Zhu H."/>
            <person name="Yu Y."/>
            <person name="Zhang M."/>
            <person name="Li M."/>
            <person name="Yao J."/>
            <person name="Lu Q."/>
            <person name="Yao P."/>
            <person name="Bo X."/>
            <person name="Wo J."/>
            <person name="Wang S."/>
            <person name="Hu S."/>
        </authorList>
    </citation>
    <scope>NUCLEOTIDE SEQUENCE [GENOMIC RNA]</scope>
    <source>
        <strain>Isolate ZJ01</strain>
    </source>
</reference>
<reference key="14">
    <citation type="submission" date="2003-06" db="EMBL/GenBank/DDBJ databases">
        <title>Genomic sequence of SARS isolate from the first fatal case in Taiwan.</title>
        <authorList>
            <person name="Yang J.-Y."/>
            <person name="Lin J.-H."/>
            <person name="Chiu S.-C."/>
            <person name="Wang S.-F."/>
            <person name="Lee S.C."/>
            <person name="Lin Y.-C."/>
            <person name="Hsu C.-K."/>
            <person name="Chen H.-Y."/>
            <person name="Chang J.G."/>
            <person name="Chen P.-J."/>
            <person name="Su I.-J."/>
        </authorList>
    </citation>
    <scope>NUCLEOTIDE SEQUENCE [GENOMIC RNA]</scope>
    <source>
        <strain>Isolate TWC</strain>
    </source>
</reference>
<reference key="15">
    <citation type="submission" date="2003-06" db="EMBL/GenBank/DDBJ databases">
        <authorList>
            <person name="Yuan Z."/>
            <person name="Zhang X."/>
            <person name="Hu Y."/>
            <person name="Lan S."/>
            <person name="Wang H."/>
            <person name="Zhou Z."/>
            <person name="Wen Y."/>
        </authorList>
    </citation>
    <scope>NUCLEOTIDE SEQUENCE [GENOMIC RNA]</scope>
    <source>
        <strain>Isolate Shanghai LY</strain>
    </source>
</reference>
<reference key="16">
    <citation type="submission" date="2003-07" db="EMBL/GenBank/DDBJ databases">
        <authorList>
            <person name="Chang J.-G.C."/>
            <person name="Lin T.-H."/>
            <person name="Chen C.-M."/>
            <person name="Lin C.-S."/>
            <person name="Chan W.-L."/>
            <person name="Shih M.-C."/>
        </authorList>
    </citation>
    <scope>NUCLEOTIDE SEQUENCE [GENOMIC RNA]</scope>
    <source>
        <strain>Isolate Taiwan TC1</strain>
        <strain>Isolate Taiwan TC2</strain>
        <strain>Isolate Taiwan TC3</strain>
    </source>
</reference>
<reference key="17">
    <citation type="submission" date="2003-07" db="EMBL/GenBank/DDBJ databases">
        <title>The complete genome of SARS coronavirus TWH.</title>
        <authorList>
            <person name="Shu H.Y."/>
            <person name="Wu K.M."/>
            <person name="Tsai S.F."/>
        </authorList>
    </citation>
    <scope>NUCLEOTIDE SEQUENCE [GENOMIC RNA]</scope>
    <source>
        <strain>Isolate TWH</strain>
        <strain>Isolate TWJ</strain>
        <strain>Isolate TWK</strain>
        <strain>Isolate TWS</strain>
        <strain>Isolate TWY</strain>
    </source>
</reference>
<reference key="18">
    <citation type="submission" date="2003-07" db="EMBL/GenBank/DDBJ databases">
        <authorList>
            <person name="Canducci F."/>
            <person name="Clementi M."/>
            <person name="Poli G."/>
            <person name="Vicenzi E."/>
        </authorList>
    </citation>
    <scope>NUCLEOTIDE SEQUENCE [GENOMIC RNA]</scope>
    <source>
        <strain>Isolate HSR 1</strain>
    </source>
</reference>
<reference key="19">
    <citation type="submission" date="2003-08" db="EMBL/GenBank/DDBJ databases">
        <authorList>
            <person name="Yang J.-Y."/>
            <person name="Lin J.-H."/>
            <person name="Chiu S.-C."/>
            <person name="Wang S.-F."/>
            <person name="Lee H.-C."/>
            <person name="Lin Y.-C."/>
            <person name="Hsu C.-K."/>
            <person name="Chen H.-Y."/>
            <person name="Chen P.-J."/>
            <person name="Su I.-J."/>
        </authorList>
    </citation>
    <scope>NUCLEOTIDE SEQUENCE [GENOMIC RNA]</scope>
    <source>
        <strain>Isolate TWC2</strain>
        <strain>Isolate TWC3</strain>
    </source>
</reference>
<reference key="20">
    <citation type="submission" date="2003-10" db="EMBL/GenBank/DDBJ databases">
        <authorList>
            <person name="Balotta C."/>
            <person name="Corvasce S."/>
            <person name="Violin M."/>
            <person name="Galli M."/>
            <person name="Moroni M."/>
            <person name="Vigevani G.M."/>
            <person name="Ruan Y.J."/>
            <person name="Salemi M."/>
        </authorList>
    </citation>
    <scope>NUCLEOTIDE SEQUENCE [GENOMIC RNA]</scope>
    <source>
        <strain>Isolate AS</strain>
    </source>
</reference>
<reference key="21">
    <citation type="journal article" date="2004" name="Virus Res.">
        <title>Characterization of protein-protein interactions between the nucleocapsid protein and membrane protein of the SARS coronavirus.</title>
        <authorList>
            <person name="He R."/>
            <person name="Leeson A."/>
            <person name="Ballantine M."/>
            <person name="Andonov A."/>
            <person name="Baker L."/>
            <person name="Dobie F."/>
            <person name="Li Y."/>
            <person name="Bastien N."/>
            <person name="Feldmann H."/>
            <person name="Strocher U."/>
            <person name="Theriault S."/>
            <person name="Cutts T."/>
            <person name="Cao J."/>
            <person name="Booth T.F."/>
            <person name="Plummer F.A."/>
            <person name="Tyler S."/>
            <person name="Li X."/>
        </authorList>
    </citation>
    <scope>INTERACTION WITH MEMBRANE PROTEIN M</scope>
</reference>
<reference key="22">
    <citation type="journal article" date="2005" name="FEBS Lett.">
        <title>The nucleocapsid protein of SARS coronavirus has a high binding affinity to the human cellular heterogeneous nuclear ribonucleoprotein A1.</title>
        <authorList>
            <person name="Luo H."/>
            <person name="Chen Q."/>
            <person name="Chen J."/>
            <person name="Chen K."/>
            <person name="Shen X."/>
            <person name="Jiang H."/>
        </authorList>
    </citation>
    <scope>INTERACTION WITH HOST HNRNPA1</scope>
</reference>
<reference key="23">
    <citation type="journal article" date="2005" name="J. Infect. Dis.">
        <title>Function of HAb18G/CD147 in invasion of host cells by severe acute respiratory syndrome coronavirus.</title>
        <authorList>
            <person name="Chen Z."/>
            <person name="Mi L."/>
            <person name="Xu J."/>
            <person name="Yu J."/>
            <person name="Wang X."/>
            <person name="Jiang J."/>
            <person name="Xing J."/>
            <person name="Shang P."/>
            <person name="Qian A."/>
            <person name="Li Y."/>
            <person name="Shaw P.X."/>
            <person name="Wang J."/>
            <person name="Duan S."/>
            <person name="Ding J."/>
            <person name="Fan C."/>
            <person name="Zhang Y."/>
            <person name="Yang Y."/>
            <person name="Yu X."/>
            <person name="Feng Q."/>
            <person name="Li B."/>
            <person name="Yao X."/>
            <person name="Zhang Z."/>
            <person name="Li L."/>
            <person name="Xue X."/>
            <person name="Zhu P."/>
        </authorList>
    </citation>
    <scope>INTERACTION WITH HOST PPIA</scope>
</reference>
<reference key="24">
    <citation type="journal article" date="2007" name="Virology">
        <title>The intracellular sites of early replication and budding of SARS-coronavirus.</title>
        <authorList>
            <person name="Stertz S."/>
            <person name="Reichelt M."/>
            <person name="Spiegel M."/>
            <person name="Kuri T."/>
            <person name="Martinez-Sobrido L."/>
            <person name="Garcia-Sastre A."/>
            <person name="Weber F."/>
            <person name="Kochs G."/>
        </authorList>
    </citation>
    <scope>SUBCELLULAR LOCATION</scope>
    <scope>FUNCTION</scope>
</reference>
<reference key="25">
    <citation type="journal article" date="2008" name="J. Biol. Chem.">
        <title>Severe acute respiratory syndrome-associated coronavirus nucleocapsid protein interacts with Smad3 and modulates transforming growth factor-beta signaling.</title>
        <authorList>
            <person name="Zhao X."/>
            <person name="Nicholls J.M."/>
            <person name="Chen Y.G."/>
        </authorList>
    </citation>
    <scope>INTERACTION WITH HOST SMAD3</scope>
    <scope>FUNCTION</scope>
</reference>
<reference key="26">
    <citation type="journal article" date="2008" name="J. Mol. Biol.">
        <title>Cell type-specific cleavage of nucleocapsid protein by effector caspases during SARS coronavirus infection.</title>
        <authorList>
            <person name="Diemer C."/>
            <person name="Schneider M."/>
            <person name="Seebach J."/>
            <person name="Quaas J."/>
            <person name="Froesner G."/>
            <person name="Schaetzl H.M."/>
            <person name="Gilch S."/>
        </authorList>
    </citation>
    <scope>CLEAVAGE</scope>
    <scope>SUBCELLULAR LOCATION</scope>
    <scope>MUTAGENESIS OF 257-LYS--LYS-262 AND 400-ASP--ASP-403</scope>
</reference>
<reference key="27">
    <citation type="journal article" date="2009" name="J. Biol. Chem.">
        <title>Glycogen synthase kinase-3 regulates the phosphorylation of severe acute respiratory syndrome coronavirus nucleocapsid protein and viral replication.</title>
        <authorList>
            <person name="Wu C.H."/>
            <person name="Yeh S.H."/>
            <person name="Tsay Y.G."/>
            <person name="Shieh Y.H."/>
            <person name="Kao C.L."/>
            <person name="Chen Y.S."/>
            <person name="Wang S.H."/>
            <person name="Kuo T.J."/>
            <person name="Chen D.S."/>
            <person name="Chen P.J."/>
        </authorList>
    </citation>
    <scope>PHOSPHORYLATION AT SER-177 BY HOST GSK3A AND GSK3B</scope>
    <scope>SUBCELLULAR LOCATION</scope>
</reference>
<reference key="28">
    <citation type="journal article" date="2014" name="J. Biomed. Sci.">
        <title>SARS-CoV envelope protein palmitoylation or nucleocapsid association is not required for promoting virus-like particle production.</title>
        <authorList>
            <person name="Tseng Y.T."/>
            <person name="Wang S.M."/>
            <person name="Huang K.J."/>
            <person name="Wang C.T."/>
        </authorList>
    </citation>
    <scope>INTERACTION WITH ENVELOPE SMALL MEMBRANE PROTEIN E</scope>
</reference>
<reference key="29">
    <citation type="journal article" date="2018" name="Virology">
        <title>The coronavirus nucleocapsid protein is ADP-ribosylated.</title>
        <authorList>
            <person name="Grunewald M.E."/>
            <person name="Fehr A.R."/>
            <person name="Athmer J."/>
            <person name="Perlman S."/>
        </authorList>
    </citation>
    <scope>ADP-RIBOSYLATION</scope>
</reference>
<reference key="30">
    <citation type="journal article" date="2022" name="Nature">
        <title>Coronaviruses exploit a host cysteine-aspartic protease for replication.</title>
        <authorList>
            <person name="Chu H."/>
            <person name="Hou Y."/>
            <person name="Yang D."/>
            <person name="Wen L."/>
            <person name="Shuai H."/>
            <person name="Yoon C."/>
            <person name="Shi J."/>
            <person name="Chai Y."/>
            <person name="Yuen T.T."/>
            <person name="Hu B."/>
            <person name="Li C."/>
            <person name="Zhao X."/>
            <person name="Wang Y."/>
            <person name="Huang X."/>
            <person name="Lee K.S."/>
            <person name="Luo C."/>
            <person name="Cai J.P."/>
            <person name="Poon V.K."/>
            <person name="Chan C.C."/>
            <person name="Zhang A.J."/>
            <person name="Yuan S."/>
            <person name="Sit K.Y."/>
            <person name="Foo D.C."/>
            <person name="Au W.K."/>
            <person name="Wong K.K."/>
            <person name="Zhou J."/>
            <person name="Kok K.H."/>
            <person name="Jin D.Y."/>
            <person name="Chan J.F."/>
            <person name="Yuen K.Y."/>
        </authorList>
    </citation>
    <scope>CLEAVAGE</scope>
</reference>
<reference key="31">
    <citation type="journal article" date="2020" name="Front. Mol. Biosci.">
        <title>SR/RS Motifs as Critical Determinants of Coronavirus Life Cycle.</title>
        <authorList>
            <person name="Nikolakaki E."/>
            <person name="Giannakouros T."/>
        </authorList>
    </citation>
    <scope>REVIEW</scope>
</reference>
<reference key="32">
    <citation type="journal article" date="2004" name="Biochemistry">
        <title>Structure of the N-terminal RNA-binding domain of the SARS CoV nucleocapsid protein.</title>
        <authorList>
            <person name="Huang Q."/>
            <person name="Yu L."/>
            <person name="Petros A.M."/>
            <person name="Gunasekera A."/>
            <person name="Liu Z."/>
            <person name="Xu N."/>
            <person name="Hajduk P."/>
            <person name="Mack J."/>
            <person name="Fesik S.W."/>
            <person name="Olejniczak E.T."/>
        </authorList>
    </citation>
    <scope>STRUCTURE BY NMR OF 45-181</scope>
</reference>
<reference key="33">
    <citation type="journal article" date="2005" name="Acta Crystallogr. D">
        <title>High-resolution structure of HLA-A*1101 in complex with SARS nucleocapsid peptide.</title>
        <authorList>
            <person name="Blicher T."/>
            <person name="Kastrup J.S."/>
            <person name="Buus S."/>
            <person name="Gajhede M."/>
        </authorList>
    </citation>
    <scope>X-RAY CRYSTALLOGRAPHY (1.45 ANGSTROMS) OF 362-370</scope>
</reference>
<reference key="34">
    <citation type="journal article" date="2006" name="J. Biol. Chem.">
        <title>Crystal structure of the severe acute respiratory syndrome (SARS) coronavirus nucleocapsid protein dimerization domain reveals evolutionary linkage between corona- and arteriviridae.</title>
        <authorList>
            <person name="Yu I.M."/>
            <person name="Oldham M.L."/>
            <person name="Zhang J."/>
            <person name="Chen J."/>
        </authorList>
    </citation>
    <scope>X-RAY CRYSTALLOGRAPHY (1.75 ANGSTROMS) OF 270-370</scope>
</reference>
<reference key="35">
    <citation type="journal article" date="2007" name="J. Mol. Biol.">
        <title>Structure of the SARS coronavirus nucleocapsid protein RNA-binding dimerization domain suggests a mechanism for helical packaging of viral RNA.</title>
        <authorList>
            <person name="Chen C.Y."/>
            <person name="Chang C.K."/>
            <person name="Chang Y.W."/>
            <person name="Sue S.C."/>
            <person name="Bai H.I."/>
            <person name="Riang L."/>
            <person name="Hsiao C.D."/>
            <person name="Huang T.H."/>
        </authorList>
    </citation>
    <scope>X-RAY CRYSTALLOGRAPHY (2.50 ANGSTROMS) OF 248-365</scope>
</reference>
<reference key="36">
    <citation type="journal article" date="2007" name="J. Virol.">
        <title>Ribonucleocapsid formation of severe acute respiratory syndrome coronavirus through molecular action of the N-terminal domain of N protein.</title>
        <authorList>
            <person name="Saikatendu K.S."/>
            <person name="Joseph J.S."/>
            <person name="Subramanian V."/>
            <person name="Neuman B.W."/>
            <person name="Buchmeier M.J."/>
            <person name="Stevens R.C."/>
            <person name="Kuhn P."/>
        </authorList>
    </citation>
    <scope>RNA-BINDING</scope>
    <scope>X-RAY CRYSTALLOGRAPHY (1.17 ANGSTROMS) OF 49-129</scope>
    <source>
        <strain>Isolate Tor2</strain>
    </source>
</reference>
<reference key="37">
    <citation type="journal article" date="2008" name="J. Mol. Biol.">
        <title>Solution structure of the c-terminal dimerization domain of SARS coronavirus nucleocapsid protein solved by the SAIL-NMR method.</title>
        <authorList>
            <person name="Takeda M."/>
            <person name="Chang C.K."/>
            <person name="Ikeya T."/>
            <person name="Guentert P."/>
            <person name="Chang Y.H."/>
            <person name="Hsu Y.L."/>
            <person name="Huang T.H."/>
            <person name="Kainosho M."/>
        </authorList>
    </citation>
    <scope>STRUCTURE BY NMR OF 248-365</scope>
</reference>
<reference key="38">
    <citation type="journal article" date="2010" name="J. Virol.">
        <title>Novel immunodominant peptide presentation strategy: a featured HLA-A*2402-restricted cytotoxic T-lymphocyte epitope stabilized by intrachain hydrogen bonds from severe acute respiratory syndrome coronavirus nucleocapsid protein.</title>
        <authorList>
            <person name="Liu J."/>
            <person name="Wu P."/>
            <person name="Gao F."/>
            <person name="Qi J."/>
            <person name="Kawana-Tachikawa A."/>
            <person name="Xie J."/>
            <person name="Vavricka C.J."/>
            <person name="Iwamoto A."/>
            <person name="Li T."/>
            <person name="Gao G.F."/>
        </authorList>
    </citation>
    <scope>X-RAY CRYSTALLOGRAPHY (2.40 ANGSTROMS) OF 346-354</scope>
</reference>
<comment type="function">
    <text evidence="2 8 9">Packages the positive strand viral genome RNA into a helical ribonucleocapsid (RNP) and plays a fundamental role during virion assembly through its interactions with the viral genome and membrane protein M. Plays an important role in enhancing the efficiency of subgenomic viral RNA transcription as well as viral replication (PubMed:17210170). May modulate transforming growth factor-beta signaling by binding host SMAD3 (PubMed:18055455).</text>
</comment>
<comment type="subunit">
    <text evidence="2 6 7 12 15 16">Homooligomer. Both monomeric and oligomeric forms interact with RNA. Interacts with protein M (PubMed:15351485). Interacts with protein E (PubMed:24766657). May bind to host HNRNPA1 (Probable). Interacts with NSP3; this interaction serves to tether the genome to the newly translated replicase-transcriptase complex at a very early stage of infection (By similarity). May interact with host SMAD3 (Probable). Interacts with host PPIA/CYPA (PubMed:15688292).</text>
</comment>
<comment type="interaction">
    <interactant intactId="EBI-7602718">
        <id>P59595</id>
    </interactant>
    <interactant intactId="EBI-25487741">
        <id>P59637</id>
        <label>E</label>
    </interactant>
    <organismsDiffer>false</organismsDiffer>
    <experiments>4</experiments>
</comment>
<comment type="interaction">
    <interactant intactId="EBI-7602718">
        <id>P59595</id>
    </interactant>
    <interactant intactId="EBI-25487824">
        <id>P59596</id>
        <label>M</label>
    </interactant>
    <organismsDiffer>false</organismsDiffer>
    <experiments>19</experiments>
</comment>
<comment type="interaction">
    <interactant intactId="EBI-7602718">
        <id>P59595</id>
    </interactant>
    <interactant intactId="EBI-7602718">
        <id>P59595</id>
        <label>N</label>
    </interactant>
    <organismsDiffer>false</organismsDiffer>
    <experiments>42</experiments>
</comment>
<comment type="interaction">
    <interactant intactId="EBI-7602718">
        <id>P59595</id>
    </interactant>
    <interactant intactId="EBI-375001">
        <id>P24385</id>
        <label>CCND1</label>
    </interactant>
    <organismsDiffer>true</organismsDiffer>
    <experiments>3</experiments>
</comment>
<comment type="interaction">
    <interactant intactId="EBI-7602718">
        <id>P59595</id>
    </interactant>
    <interactant intactId="EBI-354943">
        <id>Q05639</id>
        <label>EEF1A2</label>
    </interactant>
    <organismsDiffer>true</organismsDiffer>
    <experiments>10</experiments>
</comment>
<comment type="interaction">
    <interactant intactId="EBI-7602718">
        <id>P59595</id>
    </interactant>
    <interactant intactId="EBI-1047359">
        <id>Q13283</id>
        <label>G3BP1</label>
    </interactant>
    <organismsDiffer>true</organismsDiffer>
    <experiments>12</experiments>
</comment>
<comment type="interaction">
    <interactant intactId="EBI-7602718">
        <id>P59595</id>
    </interactant>
    <interactant intactId="EBI-477622">
        <id>Q92830</id>
        <label>KAT2A</label>
    </interactant>
    <organismsDiffer>true</organismsDiffer>
    <experiments>2</experiments>
</comment>
<comment type="interaction">
    <interactant intactId="EBI-7602718">
        <id>P59595</id>
    </interactant>
    <interactant intactId="EBI-477430">
        <id>Q92831</id>
        <label>KAT2B</label>
    </interactant>
    <organismsDiffer>true</organismsDiffer>
    <experiments>2</experiments>
</comment>
<comment type="interaction">
    <interactant intactId="EBI-7602718">
        <id>P59595</id>
    </interactant>
    <interactant intactId="EBI-437708">
        <id>P62937</id>
        <label>PPIA</label>
    </interactant>
    <organismsDiffer>true</organismsDiffer>
    <experiments>4</experiments>
</comment>
<comment type="interaction">
    <interactant intactId="EBI-7602718">
        <id>P59595</id>
    </interactant>
    <interactant intactId="EBI-713955">
        <id>O75569</id>
        <label>PRKRA</label>
    </interactant>
    <organismsDiffer>true</organismsDiffer>
    <experiments>6</experiments>
</comment>
<comment type="interaction">
    <interactant intactId="EBI-7602718">
        <id>P59595</id>
    </interactant>
    <interactant intactId="EBI-357669">
        <id>P62333</id>
        <label>PSMC6</label>
    </interactant>
    <organismsDiffer>true</organismsDiffer>
    <experiments>3</experiments>
</comment>
<comment type="interaction">
    <interactant intactId="EBI-7602718">
        <id>P59595</id>
    </interactant>
    <interactant intactId="EBI-7201857">
        <id>P84025</id>
        <label>Smad3</label>
    </interactant>
    <organismsDiffer>true</organismsDiffer>
    <experiments>4</experiments>
</comment>
<comment type="interaction">
    <interactant intactId="EBI-7602718">
        <id>P59595</id>
    </interactant>
    <interactant intactId="EBI-80168">
        <id>P63279</id>
        <label>UBE2I</label>
    </interactant>
    <organismsDiffer>true</organismsDiffer>
    <experiments>12</experiments>
</comment>
<comment type="subcellular location">
    <subcellularLocation>
        <location evidence="2 8 11">Virion</location>
    </subcellularLocation>
    <subcellularLocation>
        <location evidence="2 8">Host endoplasmic reticulum-Golgi intermediate compartment</location>
    </subcellularLocation>
    <subcellularLocation>
        <location evidence="2 8">Host Golgi apparatus</location>
    </subcellularLocation>
    <subcellularLocation>
        <location evidence="8">Host cytoplasm</location>
        <location evidence="8">Host perinuclear region</location>
    </subcellularLocation>
    <subcellularLocation>
        <location evidence="10">Host nucleus</location>
    </subcellularLocation>
    <text evidence="2">Located inside the virion, complexed with the viral RNA. Probably associates with ER-derived membranes where it participates in viral RNA synthesis and virus budding.</text>
</comment>
<comment type="PTM">
    <text evidence="14">Proteolytically cleaved by host CASP6. The cleavage leads to two fragments and facilitates viral replication by inhibiting host IFN signaling. The two fragments may interact with IRF3 inhibiting its nuclear translocation after activation and reduce the expression of IFNB and IFN-stimulated genes.</text>
</comment>
<comment type="PTM">
    <text evidence="2 13">ADP-ribosylated. The ADP-ribosylation is retained in the virion during infection.</text>
</comment>
<comment type="PTM">
    <text evidence="11 12 17">Phosphorylated on serine and threonine residues (PubMed:19106108). Phosphorylated by host GSK3A and GSK3B. Phosphorylation allows recruitment of host RNA helicase DDX1 which facilitates template readthrough and enables longer subgenomic mRNA synthesis. This promotes the solubility of homodimers that would otherwise aggregate (PubMed:32974389). Host phosphatase would dephosphorylate the protein during assembly at M bound membranes (PubMed:32974389).</text>
</comment>
<comment type="similarity">
    <text evidence="2">Belongs to the betacoronavirus nucleocapsid protein family.</text>
</comment>
<name>NCAP_SARS</name>
<protein>
    <recommendedName>
        <fullName evidence="2">Nucleoprotein</fullName>
    </recommendedName>
    <alternativeName>
        <fullName evidence="2">Nucleocapsid protein</fullName>
        <shortName evidence="2">NC</shortName>
        <shortName evidence="2">Protein N</shortName>
    </alternativeName>
</protein>
<accession>P59595</accession>
<accession>Q7T3Z4</accession>
<accession>Q7TA14</accession>
<accession>Q7TF99</accession>
<accession>Q80E50</accession>
<proteinExistence type="evidence at protein level"/>
<gene>
    <name evidence="2" type="primary">N</name>
    <name type="ORF">9a</name>
</gene>
<organism>
    <name type="scientific">Severe acute respiratory syndrome coronavirus</name>
    <name type="common">SARS-CoV</name>
    <dbReference type="NCBI Taxonomy" id="694009"/>
    <lineage>
        <taxon>Viruses</taxon>
        <taxon>Riboviria</taxon>
        <taxon>Orthornavirae</taxon>
        <taxon>Pisuviricota</taxon>
        <taxon>Pisoniviricetes</taxon>
        <taxon>Nidovirales</taxon>
        <taxon>Cornidovirineae</taxon>
        <taxon>Coronaviridae</taxon>
        <taxon>Orthocoronavirinae</taxon>
        <taxon>Betacoronavirus</taxon>
        <taxon>Sarbecovirus</taxon>
    </lineage>
</organism>
<dbReference type="EMBL" id="AY278741">
    <property type="protein sequence ID" value="AAP13445.1"/>
    <property type="molecule type" value="Genomic_RNA"/>
</dbReference>
<dbReference type="EMBL" id="AY274119">
    <property type="protein sequence ID" value="AAP41047.1"/>
    <property type="molecule type" value="Genomic_RNA"/>
</dbReference>
<dbReference type="EMBL" id="AY278554">
    <property type="protein sequence ID" value="AAP13814.1"/>
    <property type="molecule type" value="Genomic_RNA"/>
</dbReference>
<dbReference type="EMBL" id="AY282752">
    <property type="protein sequence ID" value="AAP30714.1"/>
    <property type="molecule type" value="Genomic_RNA"/>
</dbReference>
<dbReference type="EMBL" id="AY304492">
    <property type="status" value="NOT_ANNOTATED_CDS"/>
    <property type="molecule type" value="Genomic_RNA"/>
</dbReference>
<dbReference type="EMBL" id="AY304495">
    <property type="status" value="NOT_ANNOTATED_CDS"/>
    <property type="molecule type" value="Genomic_RNA"/>
</dbReference>
<dbReference type="EMBL" id="AY278491">
    <property type="status" value="NOT_ANNOTATED_CDS"/>
    <property type="molecule type" value="Genomic_RNA"/>
</dbReference>
<dbReference type="EMBL" id="AY283794">
    <property type="status" value="NOT_ANNOTATED_CDS"/>
    <property type="molecule type" value="Genomic_RNA"/>
</dbReference>
<dbReference type="EMBL" id="AY283795">
    <property type="status" value="NOT_ANNOTATED_CDS"/>
    <property type="molecule type" value="Genomic_RNA"/>
</dbReference>
<dbReference type="EMBL" id="AY283796">
    <property type="status" value="NOT_ANNOTATED_CDS"/>
    <property type="molecule type" value="Genomic_RNA"/>
</dbReference>
<dbReference type="EMBL" id="AY283797">
    <property type="status" value="NOT_ANNOTATED_CDS"/>
    <property type="molecule type" value="Genomic_RNA"/>
</dbReference>
<dbReference type="EMBL" id="AY278487">
    <property type="status" value="NOT_ANNOTATED_CDS"/>
    <property type="molecule type" value="Genomic_RNA"/>
</dbReference>
<dbReference type="EMBL" id="AY278488">
    <property type="protein sequence ID" value="AAP30037.1"/>
    <property type="molecule type" value="Genomic_RNA"/>
</dbReference>
<dbReference type="EMBL" id="AY278489">
    <property type="protein sequence ID" value="AAP51234.1"/>
    <property type="molecule type" value="Genomic_RNA"/>
</dbReference>
<dbReference type="EMBL" id="AY278490">
    <property type="status" value="NOT_ANNOTATED_CDS"/>
    <property type="molecule type" value="Genomic_RNA"/>
</dbReference>
<dbReference type="EMBL" id="AY279354">
    <property type="status" value="NOT_ANNOTATED_CDS"/>
    <property type="molecule type" value="Genomic_RNA"/>
</dbReference>
<dbReference type="EMBL" id="AY291451">
    <property type="protein sequence ID" value="AAP37024.1"/>
    <property type="molecule type" value="Genomic_RNA"/>
</dbReference>
<dbReference type="EMBL" id="AY310120">
    <property type="protein sequence ID" value="AAP50495.1"/>
    <property type="molecule type" value="Genomic_RNA"/>
</dbReference>
<dbReference type="EMBL" id="AY291315">
    <property type="protein sequence ID" value="AAP33707.1"/>
    <property type="molecule type" value="Genomic_RNA"/>
</dbReference>
<dbReference type="EMBL" id="AY307165">
    <property type="protein sequence ID" value="AAP49024.1"/>
    <property type="molecule type" value="Genomic_RNA"/>
</dbReference>
<dbReference type="EMBL" id="AY290752">
    <property type="protein sequence ID" value="AAP44772.1"/>
    <property type="molecule type" value="Genomic_RNA"/>
</dbReference>
<dbReference type="EMBL" id="AY321118">
    <property type="status" value="NOT_ANNOTATED_CDS"/>
    <property type="molecule type" value="Genomic_RNA"/>
</dbReference>
<dbReference type="EMBL" id="AH012999">
    <property type="protein sequence ID" value="AAP82974.1"/>
    <property type="molecule type" value="Genomic_RNA"/>
</dbReference>
<dbReference type="EMBL" id="AY338174">
    <property type="protein sequence ID" value="AAQ01605.1"/>
    <property type="molecule type" value="Genomic_RNA"/>
</dbReference>
<dbReference type="EMBL" id="AY338175">
    <property type="protein sequence ID" value="AAQ01617.1"/>
    <property type="molecule type" value="Genomic_RNA"/>
</dbReference>
<dbReference type="EMBL" id="AY348314">
    <property type="protein sequence ID" value="AAP97890.1"/>
    <property type="molecule type" value="Genomic_RNA"/>
</dbReference>
<dbReference type="EMBL" id="AP006557">
    <property type="protein sequence ID" value="BAC81358.1"/>
    <property type="molecule type" value="Genomic_RNA"/>
</dbReference>
<dbReference type="EMBL" id="AP006558">
    <property type="protein sequence ID" value="BAC81372.1"/>
    <property type="molecule type" value="Genomic_RNA"/>
</dbReference>
<dbReference type="EMBL" id="AP006559">
    <property type="protein sequence ID" value="BAC81386.1"/>
    <property type="molecule type" value="Genomic_RNA"/>
</dbReference>
<dbReference type="EMBL" id="AP006560">
    <property type="protein sequence ID" value="BAC81400.1"/>
    <property type="molecule type" value="Genomic_RNA"/>
</dbReference>
<dbReference type="EMBL" id="AP006561">
    <property type="protein sequence ID" value="BAC81414.1"/>
    <property type="molecule type" value="Genomic_RNA"/>
</dbReference>
<dbReference type="EMBL" id="AY323977">
    <property type="protein sequence ID" value="AAP72984.1"/>
    <property type="molecule type" value="Genomic_RNA"/>
</dbReference>
<dbReference type="EMBL" id="AY362698">
    <property type="status" value="NOT_ANNOTATED_CDS"/>
    <property type="molecule type" value="Genomic_RNA"/>
</dbReference>
<dbReference type="EMBL" id="AY362699">
    <property type="status" value="NOT_ANNOTATED_CDS"/>
    <property type="molecule type" value="Genomic_RNA"/>
</dbReference>
<dbReference type="EMBL" id="AY427439">
    <property type="protein sequence ID" value="AAQ94070.1"/>
    <property type="molecule type" value="Genomic_RNA"/>
</dbReference>
<dbReference type="PDB" id="1SSK">
    <property type="method" value="NMR"/>
    <property type="chains" value="A=45-181"/>
</dbReference>
<dbReference type="PDB" id="1X7Q">
    <property type="method" value="X-ray"/>
    <property type="resolution" value="1.45 A"/>
    <property type="chains" value="C=362-370"/>
</dbReference>
<dbReference type="PDB" id="2CJR">
    <property type="method" value="X-ray"/>
    <property type="resolution" value="2.50 A"/>
    <property type="chains" value="A/B/C/D/E/F/G/H=248-365"/>
</dbReference>
<dbReference type="PDB" id="2GIB">
    <property type="method" value="X-ray"/>
    <property type="resolution" value="1.75 A"/>
    <property type="chains" value="A/B=270-370"/>
</dbReference>
<dbReference type="PDB" id="2JW8">
    <property type="method" value="NMR"/>
    <property type="chains" value="A/B=248-365"/>
</dbReference>
<dbReference type="PDB" id="2OFZ">
    <property type="method" value="X-ray"/>
    <property type="resolution" value="1.17 A"/>
    <property type="chains" value="A=49-174"/>
</dbReference>
<dbReference type="PDB" id="2OG3">
    <property type="method" value="X-ray"/>
    <property type="resolution" value="1.85 A"/>
    <property type="chains" value="A=49-174"/>
</dbReference>
<dbReference type="PDB" id="3I6L">
    <property type="method" value="X-ray"/>
    <property type="resolution" value="2.40 A"/>
    <property type="chains" value="F=346-354"/>
</dbReference>
<dbReference type="PDB" id="6IEX">
    <property type="method" value="X-ray"/>
    <property type="resolution" value="2.31 A"/>
    <property type="chains" value="C=216-225"/>
</dbReference>
<dbReference type="PDB" id="7LG0">
    <property type="method" value="X-ray"/>
    <property type="resolution" value="2.30 A"/>
    <property type="chains" value="C=106-114"/>
</dbReference>
<dbReference type="PDBsum" id="1SSK"/>
<dbReference type="PDBsum" id="1X7Q"/>
<dbReference type="PDBsum" id="2CJR"/>
<dbReference type="PDBsum" id="2GIB"/>
<dbReference type="PDBsum" id="2JW8"/>
<dbReference type="PDBsum" id="2OFZ"/>
<dbReference type="PDBsum" id="2OG3"/>
<dbReference type="PDBsum" id="3I6L"/>
<dbReference type="PDBsum" id="6IEX"/>
<dbReference type="PDBsum" id="7LG0"/>
<dbReference type="BMRB" id="P59595"/>
<dbReference type="SMR" id="P59595"/>
<dbReference type="BioGRID" id="4383916">
    <property type="interactions" value="109"/>
</dbReference>
<dbReference type="ComplexPortal" id="CPX-5720">
    <property type="entry name" value="SARS-CoV nucleocapsid complex"/>
</dbReference>
<dbReference type="IntAct" id="P59595">
    <property type="interactions" value="252"/>
</dbReference>
<dbReference type="MINT" id="P59595"/>
<dbReference type="iPTMnet" id="P59595"/>
<dbReference type="ABCD" id="P59595">
    <property type="antibodies" value="13 sequenced antibodies"/>
</dbReference>
<dbReference type="DNASU" id="1489678"/>
<dbReference type="OrthoDB" id="3036at10239"/>
<dbReference type="Reactome" id="R-HSA-9678110">
    <property type="pathway name" value="Attachment and Entry"/>
</dbReference>
<dbReference type="Reactome" id="R-HSA-9679509">
    <property type="pathway name" value="Virion Assembly and Release"/>
</dbReference>
<dbReference type="Reactome" id="R-HSA-9682708">
    <property type="pathway name" value="Transcription of SARS-CoV-1 sgRNAs"/>
</dbReference>
<dbReference type="Reactome" id="R-HSA-9683610">
    <property type="pathway name" value="Maturation of nucleoprotein"/>
</dbReference>
<dbReference type="Reactome" id="R-HSA-9683701">
    <property type="pathway name" value="Translation of Structural Proteins"/>
</dbReference>
<dbReference type="Reactome" id="R-HSA-9692914">
    <property type="pathway name" value="SARS-CoV-1-host interactions"/>
</dbReference>
<dbReference type="Reactome" id="R-HSA-9692916">
    <property type="pathway name" value="SARS-CoV-1 activates/modulates innate immune responses"/>
</dbReference>
<dbReference type="Reactome" id="R-HSA-9735869">
    <property type="pathway name" value="SARS-CoV-1 modulates host translation machinery"/>
</dbReference>
<dbReference type="Reactome" id="R-HSA-9735871">
    <property type="pathway name" value="SARS-CoV-1 targets host intracellular signalling and regulatory pathways"/>
</dbReference>
<dbReference type="SIGNOR" id="P59595"/>
<dbReference type="EvolutionaryTrace" id="P59595"/>
<dbReference type="Proteomes" id="UP000000354">
    <property type="component" value="Segment"/>
</dbReference>
<dbReference type="Proteomes" id="UP000103670">
    <property type="component" value="Segment"/>
</dbReference>
<dbReference type="Proteomes" id="UP000109640">
    <property type="component" value="Segment"/>
</dbReference>
<dbReference type="Proteomes" id="UP000116947">
    <property type="component" value="Segment"/>
</dbReference>
<dbReference type="Proteomes" id="UP000121636">
    <property type="component" value="Segment"/>
</dbReference>
<dbReference type="Proteomes" id="UP000131569">
    <property type="component" value="Segment"/>
</dbReference>
<dbReference type="Proteomes" id="UP000131955">
    <property type="component" value="Segment"/>
</dbReference>
<dbReference type="Proteomes" id="UP000137377">
    <property type="component" value="Genome"/>
</dbReference>
<dbReference type="Proteomes" id="UP000138690">
    <property type="component" value="Segment"/>
</dbReference>
<dbReference type="Proteomes" id="UP000143093">
    <property type="component" value="Segment"/>
</dbReference>
<dbReference type="Proteomes" id="UP000145651">
    <property type="component" value="Segment"/>
</dbReference>
<dbReference type="Proteomes" id="UP000146108">
    <property type="component" value="Segment"/>
</dbReference>
<dbReference type="Proteomes" id="UP000146181">
    <property type="component" value="Segment"/>
</dbReference>
<dbReference type="Proteomes" id="UP000146296">
    <property type="component" value="Segment"/>
</dbReference>
<dbReference type="Proteomes" id="UP000148194">
    <property type="component" value="Segment"/>
</dbReference>
<dbReference type="Proteomes" id="UP000153467">
    <property type="component" value="Segment"/>
</dbReference>
<dbReference type="Proteomes" id="UP000160648">
    <property type="component" value="Segment"/>
</dbReference>
<dbReference type="Proteomes" id="UP000172416">
    <property type="component" value="Segment"/>
</dbReference>
<dbReference type="Proteomes" id="UP000180358">
    <property type="component" value="Segment"/>
</dbReference>
<dbReference type="GO" id="GO:0044172">
    <property type="term" value="C:host cell endoplasmic reticulum-Golgi intermediate compartment"/>
    <property type="evidence" value="ECO:0000314"/>
    <property type="project" value="UniProtKB"/>
</dbReference>
<dbReference type="GO" id="GO:0044177">
    <property type="term" value="C:host cell Golgi apparatus"/>
    <property type="evidence" value="ECO:0000314"/>
    <property type="project" value="UniProtKB"/>
</dbReference>
<dbReference type="GO" id="GO:0042025">
    <property type="term" value="C:host cell nucleus"/>
    <property type="evidence" value="ECO:0007669"/>
    <property type="project" value="UniProtKB-SubCell"/>
</dbReference>
<dbReference type="GO" id="GO:0044220">
    <property type="term" value="C:host cell perinuclear region of cytoplasm"/>
    <property type="evidence" value="ECO:0000314"/>
    <property type="project" value="UniProtKB"/>
</dbReference>
<dbReference type="GO" id="GO:0005886">
    <property type="term" value="C:plasma membrane"/>
    <property type="evidence" value="ECO:0000304"/>
    <property type="project" value="Reactome"/>
</dbReference>
<dbReference type="GO" id="GO:1990904">
    <property type="term" value="C:ribonucleoprotein complex"/>
    <property type="evidence" value="ECO:0007669"/>
    <property type="project" value="UniProtKB-KW"/>
</dbReference>
<dbReference type="GO" id="GO:0019028">
    <property type="term" value="C:viral capsid"/>
    <property type="evidence" value="ECO:0000266"/>
    <property type="project" value="ComplexPortal"/>
</dbReference>
<dbReference type="GO" id="GO:0019013">
    <property type="term" value="C:viral nucleocapsid"/>
    <property type="evidence" value="ECO:0000314"/>
    <property type="project" value="UniProtKB"/>
</dbReference>
<dbReference type="GO" id="GO:0003677">
    <property type="term" value="F:DNA binding"/>
    <property type="evidence" value="ECO:0000269"/>
    <property type="project" value="DisProt"/>
</dbReference>
<dbReference type="GO" id="GO:0042802">
    <property type="term" value="F:identical protein binding"/>
    <property type="evidence" value="ECO:0000353"/>
    <property type="project" value="IntAct"/>
</dbReference>
<dbReference type="GO" id="GO:0060090">
    <property type="term" value="F:molecular adaptor activity"/>
    <property type="evidence" value="ECO:0000269"/>
    <property type="project" value="DisProt"/>
</dbReference>
<dbReference type="GO" id="GO:0003723">
    <property type="term" value="F:RNA binding"/>
    <property type="evidence" value="ECO:0007669"/>
    <property type="project" value="UniProtKB-UniRule"/>
</dbReference>
<dbReference type="GO" id="GO:0032688">
    <property type="term" value="P:negative regulation of interferon-beta production"/>
    <property type="evidence" value="ECO:0000266"/>
    <property type="project" value="ComplexPortal"/>
</dbReference>
<dbReference type="GO" id="GO:0019074">
    <property type="term" value="P:viral RNA genome packaging"/>
    <property type="evidence" value="ECO:0000303"/>
    <property type="project" value="ComplexPortal"/>
</dbReference>
<dbReference type="CDD" id="cd21595">
    <property type="entry name" value="CoV_N-CTD"/>
    <property type="match status" value="1"/>
</dbReference>
<dbReference type="CDD" id="cd21554">
    <property type="entry name" value="CoV_N-NTD"/>
    <property type="match status" value="1"/>
</dbReference>
<dbReference type="DisProt" id="DP00948"/>
<dbReference type="HAMAP" id="MF_04096">
    <property type="entry name" value="BETA_CORONA_NCAP"/>
    <property type="match status" value="1"/>
</dbReference>
<dbReference type="InterPro" id="IPR044344">
    <property type="entry name" value="N_prot_C_CoV"/>
</dbReference>
<dbReference type="InterPro" id="IPR044345">
    <property type="entry name" value="N_prot_N_CoV"/>
</dbReference>
<dbReference type="InterPro" id="IPR043505">
    <property type="entry name" value="NCAP_bCoV"/>
</dbReference>
<dbReference type="InterPro" id="IPR001218">
    <property type="entry name" value="Nucleocap_CoV"/>
</dbReference>
<dbReference type="InterPro" id="IPR037179">
    <property type="entry name" value="Nucleocapsid_C"/>
</dbReference>
<dbReference type="InterPro" id="IPR037195">
    <property type="entry name" value="Nucleocapsid_N"/>
</dbReference>
<dbReference type="Pfam" id="PF00937">
    <property type="entry name" value="CoV_nucleocap"/>
    <property type="match status" value="1"/>
</dbReference>
<dbReference type="PIRSF" id="PIRSF003888">
    <property type="entry name" value="Corona_nucleocap"/>
    <property type="match status" value="1"/>
</dbReference>
<dbReference type="SUPFAM" id="SSF110304">
    <property type="entry name" value="Coronavirus RNA-binding domain"/>
    <property type="match status" value="1"/>
</dbReference>
<dbReference type="SUPFAM" id="SSF103068">
    <property type="entry name" value="Nucleocapsid protein dimerization domain"/>
    <property type="match status" value="1"/>
</dbReference>
<dbReference type="PROSITE" id="PS51929">
    <property type="entry name" value="COV_N_CTD"/>
    <property type="match status" value="1"/>
</dbReference>
<dbReference type="PROSITE" id="PS51928">
    <property type="entry name" value="COV_N_NTD"/>
    <property type="match status" value="1"/>
</dbReference>
<sequence length="422" mass="46025">MSDNGPQSNQRSAPRITFGGPTDSTDNNQNGGRNGARPKQRRPQGLPNNTASWFTALTQHGKEELRFPRGQGVPINTNSGPDDQIGYYRRATRRVRGGDGKMKELSPRWYFYYLGTGPEASLPYGANKEGIVWVATEGALNTPKDHIGTRNPNNNAATVLQLPQGTTLPKGFYAEGSRGGSQASSRSSSRSRGNSRNSTPGSSRGNSPARMASGGGETALALLLLDRLNQLESKVSGKGQQQQGQTVTKKSAAEASKKPRQKRTATKQYNVTQAFGRRGPEQTQGNFGDQDLIRQGTDYKHWPQIAQFAPSASAFFGMSRIGMEVTPSGTWLTYHGAIKLDDKDPQFKDNVILLNKHIDAYKTFPPTEPKKDKKKKTDEAQPLPQRQKKQPTVTLLPAADMDDFSRQLQNSMSGASADSTQA</sequence>
<feature type="chain" id="PRO_0000106003" description="Nucleoprotein">
    <location>
        <begin position="1"/>
        <end position="422"/>
    </location>
</feature>
<feature type="domain" description="CoV N NTD" evidence="3">
    <location>
        <begin position="49"/>
        <end position="176"/>
    </location>
</feature>
<feature type="domain" description="CoV N CTD" evidence="4">
    <location>
        <begin position="248"/>
        <end position="365"/>
    </location>
</feature>
<feature type="region of interest" description="Disordered" evidence="5">
    <location>
        <begin position="1"/>
        <end position="52"/>
    </location>
</feature>
<feature type="region of interest" description="RNA-binding" evidence="2">
    <location>
        <begin position="42"/>
        <end position="187"/>
    </location>
</feature>
<feature type="region of interest" description="RNA-binding">
    <location>
        <begin position="45"/>
        <end position="181"/>
    </location>
</feature>
<feature type="region of interest" description="Disordered" evidence="5">
    <location>
        <begin position="167"/>
        <end position="214"/>
    </location>
</feature>
<feature type="region of interest" description="SR region" evidence="17">
    <location>
        <begin position="177"/>
        <end position="204"/>
    </location>
</feature>
<feature type="region of interest" description="Disordered" evidence="5">
    <location>
        <begin position="234"/>
        <end position="287"/>
    </location>
</feature>
<feature type="region of interest" description="Dimerization" evidence="2">
    <location>
        <begin position="259"/>
        <end position="362"/>
    </location>
</feature>
<feature type="region of interest" description="Disordered" evidence="5">
    <location>
        <begin position="362"/>
        <end position="422"/>
    </location>
</feature>
<feature type="short sequence motif" description="Nuclear localization signal" evidence="10">
    <location>
        <begin position="257"/>
        <end position="265"/>
    </location>
</feature>
<feature type="compositionally biased region" description="Polar residues" evidence="5">
    <location>
        <begin position="1"/>
        <end position="12"/>
    </location>
</feature>
<feature type="compositionally biased region" description="Polar residues" evidence="5">
    <location>
        <begin position="22"/>
        <end position="31"/>
    </location>
</feature>
<feature type="compositionally biased region" description="Low complexity" evidence="5">
    <location>
        <begin position="180"/>
        <end position="207"/>
    </location>
</feature>
<feature type="compositionally biased region" description="Low complexity" evidence="5">
    <location>
        <begin position="234"/>
        <end position="250"/>
    </location>
</feature>
<feature type="compositionally biased region" description="Basic and acidic residues" evidence="5">
    <location>
        <begin position="368"/>
        <end position="379"/>
    </location>
</feature>
<feature type="compositionally biased region" description="Polar residues" evidence="5">
    <location>
        <begin position="406"/>
        <end position="422"/>
    </location>
</feature>
<feature type="binding site" evidence="1">
    <location>
        <position position="93"/>
    </location>
    <ligand>
        <name>RNA</name>
        <dbReference type="ChEBI" id="CHEBI:33697"/>
    </ligand>
</feature>
<feature type="binding site" evidence="1">
    <location>
        <position position="108"/>
    </location>
    <ligand>
        <name>RNA</name>
        <dbReference type="ChEBI" id="CHEBI:33697"/>
    </ligand>
</feature>
<feature type="binding site" evidence="1">
    <location>
        <position position="150"/>
    </location>
    <ligand>
        <name>RNA</name>
        <dbReference type="ChEBI" id="CHEBI:33697"/>
    </ligand>
</feature>
<feature type="site" description="Cleavage (by host CASP6)" evidence="10">
    <location>
        <begin position="400"/>
        <end position="403"/>
    </location>
</feature>
<feature type="modified residue" description="Phosphoserine; by host" evidence="2 11">
    <location>
        <position position="177"/>
    </location>
</feature>
<feature type="sequence variant" description="In strain: Isolate Frankfurt 1 and Isolate FRA.">
    <original>T</original>
    <variation>I</variation>
    <location>
        <position position="50"/>
    </location>
</feature>
<feature type="sequence variant" description="In strain: Isolate BJ03.">
    <original>N</original>
    <variation>Y</variation>
    <location>
        <position position="154"/>
    </location>
</feature>
<feature type="sequence variant" description="In strain: Isolate CUHK-Su10.">
    <original>G</original>
    <variation>C</variation>
    <location>
        <position position="193"/>
    </location>
</feature>
<feature type="sequence variant" description="In strain: Isolate Shanghai LY.">
    <original>VT</original>
    <variation>AA</variation>
    <location>
        <begin position="325"/>
        <end position="326"/>
    </location>
</feature>
<feature type="mutagenesis site" description="Loss of cleavage by host CASP6." evidence="10">
    <original>KKPRQK</original>
    <variation>GGPRQG</variation>
    <location>
        <begin position="257"/>
        <end position="262"/>
    </location>
</feature>
<feature type="mutagenesis site" description="Loss of cleavage by host CASP6." evidence="10">
    <original>DMDD</original>
    <variation>EMDE</variation>
    <location>
        <begin position="400"/>
        <end position="403"/>
    </location>
</feature>
<feature type="strand" evidence="18">
    <location>
        <begin position="56"/>
        <end position="59"/>
    </location>
</feature>
<feature type="strand" evidence="23">
    <location>
        <begin position="61"/>
        <end position="63"/>
    </location>
</feature>
<feature type="strand" evidence="18">
    <location>
        <begin position="77"/>
        <end position="79"/>
    </location>
</feature>
<feature type="helix" evidence="22">
    <location>
        <begin position="81"/>
        <end position="83"/>
    </location>
</feature>
<feature type="strand" evidence="22">
    <location>
        <begin position="85"/>
        <end position="91"/>
    </location>
</feature>
<feature type="strand" evidence="22">
    <location>
        <begin position="94"/>
        <end position="96"/>
    </location>
</feature>
<feature type="turn" evidence="18">
    <location>
        <begin position="98"/>
        <end position="100"/>
    </location>
</feature>
<feature type="strand" evidence="22">
    <location>
        <begin position="102"/>
        <end position="104"/>
    </location>
</feature>
<feature type="strand" evidence="22">
    <location>
        <begin position="108"/>
        <end position="113"/>
    </location>
</feature>
<feature type="turn" evidence="22">
    <location>
        <begin position="118"/>
        <end position="121"/>
    </location>
</feature>
<feature type="strand" evidence="22">
    <location>
        <begin position="131"/>
        <end position="135"/>
    </location>
</feature>
<feature type="strand" evidence="22">
    <location>
        <begin position="140"/>
        <end position="142"/>
    </location>
</feature>
<feature type="turn" evidence="22">
    <location>
        <begin position="145"/>
        <end position="147"/>
    </location>
</feature>
<feature type="turn" evidence="22">
    <location>
        <begin position="152"/>
        <end position="154"/>
    </location>
</feature>
<feature type="strand" evidence="19">
    <location>
        <begin position="254"/>
        <end position="258"/>
    </location>
</feature>
<feature type="helix" evidence="19">
    <location>
        <begin position="260"/>
        <end position="262"/>
    </location>
</feature>
<feature type="helix" evidence="20">
    <location>
        <begin position="271"/>
        <end position="275"/>
    </location>
</feature>
<feature type="turn" evidence="21">
    <location>
        <begin position="282"/>
        <end position="284"/>
    </location>
</feature>
<feature type="helix" evidence="20">
    <location>
        <begin position="290"/>
        <end position="295"/>
    </location>
</feature>
<feature type="helix" evidence="20">
    <location>
        <begin position="296"/>
        <end position="298"/>
    </location>
</feature>
<feature type="helix" evidence="20">
    <location>
        <begin position="302"/>
        <end position="306"/>
    </location>
</feature>
<feature type="helix" evidence="20">
    <location>
        <begin position="312"/>
        <end position="318"/>
    </location>
</feature>
<feature type="strand" evidence="20">
    <location>
        <begin position="319"/>
        <end position="325"/>
    </location>
</feature>
<feature type="strand" evidence="20">
    <location>
        <begin position="330"/>
        <end position="340"/>
    </location>
</feature>
<feature type="helix" evidence="20">
    <location>
        <begin position="347"/>
        <end position="357"/>
    </location>
</feature>
<feature type="helix" evidence="20">
    <location>
        <begin position="360"/>
        <end position="363"/>
    </location>
</feature>
<keyword id="KW-0002">3D-structure</keyword>
<keyword id="KW-0013">ADP-ribosylation</keyword>
<keyword id="KW-1035">Host cytoplasm</keyword>
<keyword id="KW-1040">Host Golgi apparatus</keyword>
<keyword id="KW-1048">Host nucleus</keyword>
<keyword id="KW-0945">Host-virus interaction</keyword>
<keyword id="KW-0597">Phosphoprotein</keyword>
<keyword id="KW-1185">Reference proteome</keyword>
<keyword id="KW-0687">Ribonucleoprotein</keyword>
<keyword id="KW-0694">RNA-binding</keyword>
<keyword id="KW-0804">Transcription</keyword>
<keyword id="KW-0805">Transcription regulation</keyword>
<keyword id="KW-0543">Viral nucleoprotein</keyword>
<keyword id="KW-0946">Virion</keyword>
<organismHost>
    <name type="scientific">Homo sapiens</name>
    <name type="common">Human</name>
    <dbReference type="NCBI Taxonomy" id="9606"/>
</organismHost>
<organismHost>
    <name type="scientific">Paguma larvata</name>
    <name type="common">Masked palm civet</name>
    <dbReference type="NCBI Taxonomy" id="9675"/>
</organismHost>
<evidence type="ECO:0000250" key="1">
    <source>
        <dbReference type="UniProtKB" id="P0DTC9"/>
    </source>
</evidence>
<evidence type="ECO:0000255" key="2">
    <source>
        <dbReference type="HAMAP-Rule" id="MF_04096"/>
    </source>
</evidence>
<evidence type="ECO:0000255" key="3">
    <source>
        <dbReference type="PROSITE-ProRule" id="PRU01276"/>
    </source>
</evidence>
<evidence type="ECO:0000255" key="4">
    <source>
        <dbReference type="PROSITE-ProRule" id="PRU01277"/>
    </source>
</evidence>
<evidence type="ECO:0000256" key="5">
    <source>
        <dbReference type="SAM" id="MobiDB-lite"/>
    </source>
</evidence>
<evidence type="ECO:0000269" key="6">
    <source>
    </source>
</evidence>
<evidence type="ECO:0000269" key="7">
    <source>
    </source>
</evidence>
<evidence type="ECO:0000269" key="8">
    <source>
    </source>
</evidence>
<evidence type="ECO:0000269" key="9">
    <source>
    </source>
</evidence>
<evidence type="ECO:0000269" key="10">
    <source>
    </source>
</evidence>
<evidence type="ECO:0000269" key="11">
    <source>
    </source>
</evidence>
<evidence type="ECO:0000269" key="12">
    <source>
    </source>
</evidence>
<evidence type="ECO:0000269" key="13">
    <source>
    </source>
</evidence>
<evidence type="ECO:0000269" key="14">
    <source>
    </source>
</evidence>
<evidence type="ECO:0000305" key="15">
    <source>
    </source>
</evidence>
<evidence type="ECO:0000305" key="16">
    <source>
    </source>
</evidence>
<evidence type="ECO:0000305" key="17">
    <source>
    </source>
</evidence>
<evidence type="ECO:0007829" key="18">
    <source>
        <dbReference type="PDB" id="1SSK"/>
    </source>
</evidence>
<evidence type="ECO:0007829" key="19">
    <source>
        <dbReference type="PDB" id="2CJR"/>
    </source>
</evidence>
<evidence type="ECO:0007829" key="20">
    <source>
        <dbReference type="PDB" id="2GIB"/>
    </source>
</evidence>
<evidence type="ECO:0007829" key="21">
    <source>
        <dbReference type="PDB" id="2JW8"/>
    </source>
</evidence>
<evidence type="ECO:0007829" key="22">
    <source>
        <dbReference type="PDB" id="2OFZ"/>
    </source>
</evidence>
<evidence type="ECO:0007829" key="23">
    <source>
        <dbReference type="PDB" id="2OG3"/>
    </source>
</evidence>